<gene>
    <name evidence="1" type="primary">fadA</name>
    <name type="ordered locus">ABSDF3221</name>
</gene>
<accession>B0VLX5</accession>
<keyword id="KW-0012">Acyltransferase</keyword>
<keyword id="KW-0963">Cytoplasm</keyword>
<keyword id="KW-0276">Fatty acid metabolism</keyword>
<keyword id="KW-0442">Lipid degradation</keyword>
<keyword id="KW-0443">Lipid metabolism</keyword>
<keyword id="KW-0808">Transferase</keyword>
<protein>
    <recommendedName>
        <fullName evidence="1">3-ketoacyl-CoA thiolase</fullName>
        <ecNumber evidence="1">2.3.1.16</ecNumber>
    </recommendedName>
    <alternativeName>
        <fullName evidence="1">Acetyl-CoA acyltransferase</fullName>
    </alternativeName>
    <alternativeName>
        <fullName evidence="1">Beta-ketothiolase</fullName>
    </alternativeName>
    <alternativeName>
        <fullName evidence="1">Fatty acid oxidation complex subunit beta</fullName>
    </alternativeName>
</protein>
<evidence type="ECO:0000255" key="1">
    <source>
        <dbReference type="HAMAP-Rule" id="MF_01620"/>
    </source>
</evidence>
<proteinExistence type="inferred from homology"/>
<reference key="1">
    <citation type="journal article" date="2008" name="PLoS ONE">
        <title>Comparative analysis of Acinetobacters: three genomes for three lifestyles.</title>
        <authorList>
            <person name="Vallenet D."/>
            <person name="Nordmann P."/>
            <person name="Barbe V."/>
            <person name="Poirel L."/>
            <person name="Mangenot S."/>
            <person name="Bataille E."/>
            <person name="Dossat C."/>
            <person name="Gas S."/>
            <person name="Kreimeyer A."/>
            <person name="Lenoble P."/>
            <person name="Oztas S."/>
            <person name="Poulain J."/>
            <person name="Segurens B."/>
            <person name="Robert C."/>
            <person name="Abergel C."/>
            <person name="Claverie J.-M."/>
            <person name="Raoult D."/>
            <person name="Medigue C."/>
            <person name="Weissenbach J."/>
            <person name="Cruveiller S."/>
        </authorList>
    </citation>
    <scope>NUCLEOTIDE SEQUENCE [LARGE SCALE GENOMIC DNA]</scope>
    <source>
        <strain>SDF</strain>
    </source>
</reference>
<organism>
    <name type="scientific">Acinetobacter baumannii (strain SDF)</name>
    <dbReference type="NCBI Taxonomy" id="509170"/>
    <lineage>
        <taxon>Bacteria</taxon>
        <taxon>Pseudomonadati</taxon>
        <taxon>Pseudomonadota</taxon>
        <taxon>Gammaproteobacteria</taxon>
        <taxon>Moraxellales</taxon>
        <taxon>Moraxellaceae</taxon>
        <taxon>Acinetobacter</taxon>
        <taxon>Acinetobacter calcoaceticus/baumannii complex</taxon>
    </lineage>
</organism>
<comment type="function">
    <text evidence="1">Catalyzes the final step of fatty acid oxidation in which acetyl-CoA is released and the CoA ester of a fatty acid two carbons shorter is formed.</text>
</comment>
<comment type="catalytic activity">
    <reaction evidence="1">
        <text>an acyl-CoA + acetyl-CoA = a 3-oxoacyl-CoA + CoA</text>
        <dbReference type="Rhea" id="RHEA:21564"/>
        <dbReference type="ChEBI" id="CHEBI:57287"/>
        <dbReference type="ChEBI" id="CHEBI:57288"/>
        <dbReference type="ChEBI" id="CHEBI:58342"/>
        <dbReference type="ChEBI" id="CHEBI:90726"/>
        <dbReference type="EC" id="2.3.1.16"/>
    </reaction>
</comment>
<comment type="pathway">
    <text evidence="1">Lipid metabolism; fatty acid beta-oxidation.</text>
</comment>
<comment type="subunit">
    <text evidence="1">Heterotetramer of two alpha chains (FadB) and two beta chains (FadA).</text>
</comment>
<comment type="subcellular location">
    <subcellularLocation>
        <location evidence="1">Cytoplasm</location>
    </subcellularLocation>
</comment>
<comment type="similarity">
    <text evidence="1">Belongs to the thiolase-like superfamily. Thiolase family.</text>
</comment>
<name>FADA_ACIBS</name>
<feature type="chain" id="PRO_1000186020" description="3-ketoacyl-CoA thiolase">
    <location>
        <begin position="1"/>
        <end position="390"/>
    </location>
</feature>
<feature type="active site" description="Acyl-thioester intermediate" evidence="1">
    <location>
        <position position="95"/>
    </location>
</feature>
<feature type="active site" description="Proton acceptor" evidence="1">
    <location>
        <position position="346"/>
    </location>
</feature>
<feature type="active site" description="Proton acceptor" evidence="1">
    <location>
        <position position="376"/>
    </location>
</feature>
<dbReference type="EC" id="2.3.1.16" evidence="1"/>
<dbReference type="EMBL" id="CU468230">
    <property type="protein sequence ID" value="CAP02492.1"/>
    <property type="molecule type" value="Genomic_DNA"/>
</dbReference>
<dbReference type="SMR" id="B0VLX5"/>
<dbReference type="KEGG" id="abm:ABSDF3221"/>
<dbReference type="HOGENOM" id="CLU_031026_2_2_6"/>
<dbReference type="UniPathway" id="UPA00659"/>
<dbReference type="Proteomes" id="UP000001741">
    <property type="component" value="Chromosome"/>
</dbReference>
<dbReference type="GO" id="GO:0005737">
    <property type="term" value="C:cytoplasm"/>
    <property type="evidence" value="ECO:0007669"/>
    <property type="project" value="UniProtKB-SubCell"/>
</dbReference>
<dbReference type="GO" id="GO:0003988">
    <property type="term" value="F:acetyl-CoA C-acyltransferase activity"/>
    <property type="evidence" value="ECO:0007669"/>
    <property type="project" value="UniProtKB-UniRule"/>
</dbReference>
<dbReference type="GO" id="GO:0006635">
    <property type="term" value="P:fatty acid beta-oxidation"/>
    <property type="evidence" value="ECO:0007669"/>
    <property type="project" value="UniProtKB-UniRule"/>
</dbReference>
<dbReference type="GO" id="GO:0010124">
    <property type="term" value="P:phenylacetate catabolic process"/>
    <property type="evidence" value="ECO:0007669"/>
    <property type="project" value="TreeGrafter"/>
</dbReference>
<dbReference type="CDD" id="cd00751">
    <property type="entry name" value="thiolase"/>
    <property type="match status" value="1"/>
</dbReference>
<dbReference type="FunFam" id="3.40.47.10:FF:000010">
    <property type="entry name" value="Acetyl-CoA acetyltransferase (Thiolase)"/>
    <property type="match status" value="1"/>
</dbReference>
<dbReference type="Gene3D" id="3.40.47.10">
    <property type="match status" value="2"/>
</dbReference>
<dbReference type="HAMAP" id="MF_01620">
    <property type="entry name" value="FadA"/>
    <property type="match status" value="1"/>
</dbReference>
<dbReference type="InterPro" id="IPR012805">
    <property type="entry name" value="FadA"/>
</dbReference>
<dbReference type="InterPro" id="IPR002155">
    <property type="entry name" value="Thiolase"/>
</dbReference>
<dbReference type="InterPro" id="IPR016039">
    <property type="entry name" value="Thiolase-like"/>
</dbReference>
<dbReference type="InterPro" id="IPR050215">
    <property type="entry name" value="Thiolase-like_sf_Thiolase"/>
</dbReference>
<dbReference type="InterPro" id="IPR020615">
    <property type="entry name" value="Thiolase_acyl_enz_int_AS"/>
</dbReference>
<dbReference type="InterPro" id="IPR020610">
    <property type="entry name" value="Thiolase_AS"/>
</dbReference>
<dbReference type="InterPro" id="IPR020617">
    <property type="entry name" value="Thiolase_C"/>
</dbReference>
<dbReference type="InterPro" id="IPR020613">
    <property type="entry name" value="Thiolase_CS"/>
</dbReference>
<dbReference type="InterPro" id="IPR020616">
    <property type="entry name" value="Thiolase_N"/>
</dbReference>
<dbReference type="NCBIfam" id="TIGR01930">
    <property type="entry name" value="AcCoA-C-Actrans"/>
    <property type="match status" value="1"/>
</dbReference>
<dbReference type="NCBIfam" id="TIGR02445">
    <property type="entry name" value="fadA"/>
    <property type="match status" value="1"/>
</dbReference>
<dbReference type="NCBIfam" id="NF006510">
    <property type="entry name" value="PRK08947.1"/>
    <property type="match status" value="1"/>
</dbReference>
<dbReference type="PANTHER" id="PTHR43853:SF11">
    <property type="entry name" value="3-KETOACYL-COA THIOLASE FADA"/>
    <property type="match status" value="1"/>
</dbReference>
<dbReference type="PANTHER" id="PTHR43853">
    <property type="entry name" value="3-KETOACYL-COA THIOLASE, PEROXISOMAL"/>
    <property type="match status" value="1"/>
</dbReference>
<dbReference type="Pfam" id="PF02803">
    <property type="entry name" value="Thiolase_C"/>
    <property type="match status" value="1"/>
</dbReference>
<dbReference type="Pfam" id="PF00108">
    <property type="entry name" value="Thiolase_N"/>
    <property type="match status" value="1"/>
</dbReference>
<dbReference type="PIRSF" id="PIRSF000429">
    <property type="entry name" value="Ac-CoA_Ac_transf"/>
    <property type="match status" value="1"/>
</dbReference>
<dbReference type="SUPFAM" id="SSF53901">
    <property type="entry name" value="Thiolase-like"/>
    <property type="match status" value="2"/>
</dbReference>
<dbReference type="PROSITE" id="PS00098">
    <property type="entry name" value="THIOLASE_1"/>
    <property type="match status" value="1"/>
</dbReference>
<dbReference type="PROSITE" id="PS00737">
    <property type="entry name" value="THIOLASE_2"/>
    <property type="match status" value="1"/>
</dbReference>
<dbReference type="PROSITE" id="PS00099">
    <property type="entry name" value="THIOLASE_3"/>
    <property type="match status" value="1"/>
</dbReference>
<sequence length="390" mass="41088">MATLNPRDVVIVDGVRSAMGKSKNGMFRNVRADSLSAELVRALVARNQFDVNEVEDLIWGCVNQTLEQGMNIGRNIGLLAGLPKTVAGQTVNRLCGSSMQAIHTAAAQIATNQGDIFIIGGVEHMGHVGMMHGIDLNPEASKHYAKASNMMGLTAEMLGRMNGITREEQDAFGVESHRRAWAATQEGRFKNEIIGVEGHDANGFKILCDIDEVIRPDANLEAFKALKPVFDPKGGSVTAATSSALSDGASAMLLMSAERAQALGLKPRAVIRSMAVAGCDAAIMGYGPVPATQKALKRAGLSIADIQTVELNEAFAAQGLSVLKGLGLYDKQDIVNLNGGAIALGHPLGCSGARITTTLLNVMEQQDTQIGLATMCIGLGQGIATVIERV</sequence>